<accession>Q1IZP8</accession>
<proteinExistence type="inferred from homology"/>
<gene>
    <name evidence="1" type="primary">trpD</name>
    <name type="ordered locus">Dgeo_0986</name>
</gene>
<sequence>MTVSSSVTAPPDGRMMHARLMNGDRLTQAEAAAFMHEVMEGNVSGVRLAAALAALRVRGETPEEIAGFAQAMRASAVRVQVAPREVLLDVVGTGGDGAHTFNISTTTAFVVAAAGVPVAKHGNRAASSRAGSADVLEALGVNLDAPPQLVADGVNELGIGFMFARNYHPALRHAAPVRADLAARTVFNILGPLANPAGASHLVVGVYRPELTRMLAEVLRLLGAKGATVVYGSGLDEFTVCGPNTVTGLRNGELICRTMHPEECGVSLHPKEAIVGGSPAENAEITRALLTGGGTPAQRDIVALNAGAALRTAEQVESIAQGVARAREVMASGAGWDLLQRYAAHTQRAAS</sequence>
<reference key="1">
    <citation type="submission" date="2006-04" db="EMBL/GenBank/DDBJ databases">
        <title>Complete sequence of chromosome of Deinococcus geothermalis DSM 11300.</title>
        <authorList>
            <person name="Copeland A."/>
            <person name="Lucas S."/>
            <person name="Lapidus A."/>
            <person name="Barry K."/>
            <person name="Detter J.C."/>
            <person name="Glavina del Rio T."/>
            <person name="Hammon N."/>
            <person name="Israni S."/>
            <person name="Dalin E."/>
            <person name="Tice H."/>
            <person name="Pitluck S."/>
            <person name="Brettin T."/>
            <person name="Bruce D."/>
            <person name="Han C."/>
            <person name="Tapia R."/>
            <person name="Saunders E."/>
            <person name="Gilna P."/>
            <person name="Schmutz J."/>
            <person name="Larimer F."/>
            <person name="Land M."/>
            <person name="Hauser L."/>
            <person name="Kyrpides N."/>
            <person name="Kim E."/>
            <person name="Daly M.J."/>
            <person name="Fredrickson J.K."/>
            <person name="Makarova K.S."/>
            <person name="Gaidamakova E.K."/>
            <person name="Zhai M."/>
            <person name="Richardson P."/>
        </authorList>
    </citation>
    <scope>NUCLEOTIDE SEQUENCE [LARGE SCALE GENOMIC DNA]</scope>
    <source>
        <strain>DSM 11300 / CIP 105573 / AG-3a</strain>
    </source>
</reference>
<dbReference type="EC" id="2.4.2.18" evidence="1"/>
<dbReference type="EMBL" id="CP000359">
    <property type="protein sequence ID" value="ABF45286.1"/>
    <property type="molecule type" value="Genomic_DNA"/>
</dbReference>
<dbReference type="RefSeq" id="WP_011530123.1">
    <property type="nucleotide sequence ID" value="NC_008025.1"/>
</dbReference>
<dbReference type="SMR" id="Q1IZP8"/>
<dbReference type="STRING" id="319795.Dgeo_0986"/>
<dbReference type="KEGG" id="dge:Dgeo_0986"/>
<dbReference type="eggNOG" id="COG0547">
    <property type="taxonomic scope" value="Bacteria"/>
</dbReference>
<dbReference type="HOGENOM" id="CLU_034315_2_1_0"/>
<dbReference type="UniPathway" id="UPA00035">
    <property type="reaction ID" value="UER00041"/>
</dbReference>
<dbReference type="Proteomes" id="UP000002431">
    <property type="component" value="Chromosome"/>
</dbReference>
<dbReference type="GO" id="GO:0005829">
    <property type="term" value="C:cytosol"/>
    <property type="evidence" value="ECO:0007669"/>
    <property type="project" value="TreeGrafter"/>
</dbReference>
<dbReference type="GO" id="GO:0004048">
    <property type="term" value="F:anthranilate phosphoribosyltransferase activity"/>
    <property type="evidence" value="ECO:0007669"/>
    <property type="project" value="UniProtKB-UniRule"/>
</dbReference>
<dbReference type="GO" id="GO:0000287">
    <property type="term" value="F:magnesium ion binding"/>
    <property type="evidence" value="ECO:0007669"/>
    <property type="project" value="UniProtKB-UniRule"/>
</dbReference>
<dbReference type="GO" id="GO:0000162">
    <property type="term" value="P:L-tryptophan biosynthetic process"/>
    <property type="evidence" value="ECO:0007669"/>
    <property type="project" value="UniProtKB-UniRule"/>
</dbReference>
<dbReference type="FunFam" id="3.40.1030.10:FF:000002">
    <property type="entry name" value="Anthranilate phosphoribosyltransferase"/>
    <property type="match status" value="1"/>
</dbReference>
<dbReference type="Gene3D" id="3.40.1030.10">
    <property type="entry name" value="Nucleoside phosphorylase/phosphoribosyltransferase catalytic domain"/>
    <property type="match status" value="1"/>
</dbReference>
<dbReference type="Gene3D" id="1.20.970.10">
    <property type="entry name" value="Transferase, Pyrimidine Nucleoside Phosphorylase, Chain C"/>
    <property type="match status" value="1"/>
</dbReference>
<dbReference type="HAMAP" id="MF_00211">
    <property type="entry name" value="TrpD"/>
    <property type="match status" value="1"/>
</dbReference>
<dbReference type="InterPro" id="IPR005940">
    <property type="entry name" value="Anthranilate_Pribosyl_Tfrase"/>
</dbReference>
<dbReference type="InterPro" id="IPR000312">
    <property type="entry name" value="Glycosyl_Trfase_fam3"/>
</dbReference>
<dbReference type="InterPro" id="IPR017459">
    <property type="entry name" value="Glycosyl_Trfase_fam3_N_dom"/>
</dbReference>
<dbReference type="InterPro" id="IPR036320">
    <property type="entry name" value="Glycosyl_Trfase_fam3_N_dom_sf"/>
</dbReference>
<dbReference type="InterPro" id="IPR035902">
    <property type="entry name" value="Nuc_phospho_transferase"/>
</dbReference>
<dbReference type="NCBIfam" id="TIGR01245">
    <property type="entry name" value="trpD"/>
    <property type="match status" value="1"/>
</dbReference>
<dbReference type="PANTHER" id="PTHR43285">
    <property type="entry name" value="ANTHRANILATE PHOSPHORIBOSYLTRANSFERASE"/>
    <property type="match status" value="1"/>
</dbReference>
<dbReference type="PANTHER" id="PTHR43285:SF2">
    <property type="entry name" value="ANTHRANILATE PHOSPHORIBOSYLTRANSFERASE"/>
    <property type="match status" value="1"/>
</dbReference>
<dbReference type="Pfam" id="PF02885">
    <property type="entry name" value="Glycos_trans_3N"/>
    <property type="match status" value="1"/>
</dbReference>
<dbReference type="Pfam" id="PF00591">
    <property type="entry name" value="Glycos_transf_3"/>
    <property type="match status" value="1"/>
</dbReference>
<dbReference type="SUPFAM" id="SSF52418">
    <property type="entry name" value="Nucleoside phosphorylase/phosphoribosyltransferase catalytic domain"/>
    <property type="match status" value="1"/>
</dbReference>
<dbReference type="SUPFAM" id="SSF47648">
    <property type="entry name" value="Nucleoside phosphorylase/phosphoribosyltransferase N-terminal domain"/>
    <property type="match status" value="1"/>
</dbReference>
<comment type="function">
    <text evidence="1">Catalyzes the transfer of the phosphoribosyl group of 5-phosphorylribose-1-pyrophosphate (PRPP) to anthranilate to yield N-(5'-phosphoribosyl)-anthranilate (PRA).</text>
</comment>
<comment type="catalytic activity">
    <reaction evidence="1">
        <text>N-(5-phospho-beta-D-ribosyl)anthranilate + diphosphate = 5-phospho-alpha-D-ribose 1-diphosphate + anthranilate</text>
        <dbReference type="Rhea" id="RHEA:11768"/>
        <dbReference type="ChEBI" id="CHEBI:16567"/>
        <dbReference type="ChEBI" id="CHEBI:18277"/>
        <dbReference type="ChEBI" id="CHEBI:33019"/>
        <dbReference type="ChEBI" id="CHEBI:58017"/>
        <dbReference type="EC" id="2.4.2.18"/>
    </reaction>
</comment>
<comment type="cofactor">
    <cofactor evidence="1">
        <name>Mg(2+)</name>
        <dbReference type="ChEBI" id="CHEBI:18420"/>
    </cofactor>
    <text evidence="1">Binds 2 magnesium ions per monomer.</text>
</comment>
<comment type="pathway">
    <text evidence="1">Amino-acid biosynthesis; L-tryptophan biosynthesis; L-tryptophan from chorismate: step 2/5.</text>
</comment>
<comment type="subunit">
    <text evidence="1">Homodimer.</text>
</comment>
<comment type="similarity">
    <text evidence="1">Belongs to the anthranilate phosphoribosyltransferase family.</text>
</comment>
<name>TRPD_DEIGD</name>
<organism>
    <name type="scientific">Deinococcus geothermalis (strain DSM 11300 / CIP 105573 / AG-3a)</name>
    <dbReference type="NCBI Taxonomy" id="319795"/>
    <lineage>
        <taxon>Bacteria</taxon>
        <taxon>Thermotogati</taxon>
        <taxon>Deinococcota</taxon>
        <taxon>Deinococci</taxon>
        <taxon>Deinococcales</taxon>
        <taxon>Deinococcaceae</taxon>
        <taxon>Deinococcus</taxon>
    </lineage>
</organism>
<evidence type="ECO:0000255" key="1">
    <source>
        <dbReference type="HAMAP-Rule" id="MF_00211"/>
    </source>
</evidence>
<keyword id="KW-0028">Amino-acid biosynthesis</keyword>
<keyword id="KW-0057">Aromatic amino acid biosynthesis</keyword>
<keyword id="KW-0328">Glycosyltransferase</keyword>
<keyword id="KW-0460">Magnesium</keyword>
<keyword id="KW-0479">Metal-binding</keyword>
<keyword id="KW-0808">Transferase</keyword>
<keyword id="KW-0822">Tryptophan biosynthesis</keyword>
<protein>
    <recommendedName>
        <fullName evidence="1">Anthranilate phosphoribosyltransferase</fullName>
        <ecNumber evidence="1">2.4.2.18</ecNumber>
    </recommendedName>
</protein>
<feature type="chain" id="PRO_0000325420" description="Anthranilate phosphoribosyltransferase">
    <location>
        <begin position="1"/>
        <end position="351"/>
    </location>
</feature>
<feature type="binding site" evidence="1">
    <location>
        <position position="92"/>
    </location>
    <ligand>
        <name>5-phospho-alpha-D-ribose 1-diphosphate</name>
        <dbReference type="ChEBI" id="CHEBI:58017"/>
    </ligand>
</feature>
<feature type="binding site" evidence="1">
    <location>
        <position position="92"/>
    </location>
    <ligand>
        <name>anthranilate</name>
        <dbReference type="ChEBI" id="CHEBI:16567"/>
        <label>1</label>
    </ligand>
</feature>
<feature type="binding site" evidence="1">
    <location>
        <begin position="95"/>
        <end position="96"/>
    </location>
    <ligand>
        <name>5-phospho-alpha-D-ribose 1-diphosphate</name>
        <dbReference type="ChEBI" id="CHEBI:58017"/>
    </ligand>
</feature>
<feature type="binding site" evidence="1">
    <location>
        <position position="100"/>
    </location>
    <ligand>
        <name>5-phospho-alpha-D-ribose 1-diphosphate</name>
        <dbReference type="ChEBI" id="CHEBI:58017"/>
    </ligand>
</feature>
<feature type="binding site" evidence="1">
    <location>
        <begin position="102"/>
        <end position="105"/>
    </location>
    <ligand>
        <name>5-phospho-alpha-D-ribose 1-diphosphate</name>
        <dbReference type="ChEBI" id="CHEBI:58017"/>
    </ligand>
</feature>
<feature type="binding site" evidence="1">
    <location>
        <position position="104"/>
    </location>
    <ligand>
        <name>Mg(2+)</name>
        <dbReference type="ChEBI" id="CHEBI:18420"/>
        <label>1</label>
    </ligand>
</feature>
<feature type="binding site" evidence="1">
    <location>
        <begin position="120"/>
        <end position="128"/>
    </location>
    <ligand>
        <name>5-phospho-alpha-D-ribose 1-diphosphate</name>
        <dbReference type="ChEBI" id="CHEBI:58017"/>
    </ligand>
</feature>
<feature type="binding site" evidence="1">
    <location>
        <position position="123"/>
    </location>
    <ligand>
        <name>anthranilate</name>
        <dbReference type="ChEBI" id="CHEBI:16567"/>
        <label>1</label>
    </ligand>
</feature>
<feature type="binding site" evidence="1">
    <location>
        <position position="132"/>
    </location>
    <ligand>
        <name>5-phospho-alpha-D-ribose 1-diphosphate</name>
        <dbReference type="ChEBI" id="CHEBI:58017"/>
    </ligand>
</feature>
<feature type="binding site" evidence="1">
    <location>
        <position position="178"/>
    </location>
    <ligand>
        <name>anthranilate</name>
        <dbReference type="ChEBI" id="CHEBI:16567"/>
        <label>2</label>
    </ligand>
</feature>
<feature type="binding site" evidence="1">
    <location>
        <position position="236"/>
    </location>
    <ligand>
        <name>Mg(2+)</name>
        <dbReference type="ChEBI" id="CHEBI:18420"/>
        <label>2</label>
    </ligand>
</feature>
<feature type="binding site" evidence="1">
    <location>
        <position position="237"/>
    </location>
    <ligand>
        <name>Mg(2+)</name>
        <dbReference type="ChEBI" id="CHEBI:18420"/>
        <label>1</label>
    </ligand>
</feature>
<feature type="binding site" evidence="1">
    <location>
        <position position="237"/>
    </location>
    <ligand>
        <name>Mg(2+)</name>
        <dbReference type="ChEBI" id="CHEBI:18420"/>
        <label>2</label>
    </ligand>
</feature>